<protein>
    <recommendedName>
        <fullName>Caspase-3</fullName>
        <shortName>CASP-3</shortName>
        <ecNumber>3.4.22.56</ecNumber>
    </recommendedName>
    <alternativeName>
        <fullName>Apopain</fullName>
    </alternativeName>
    <alternativeName>
        <fullName>Cysteine protease CPP32</fullName>
    </alternativeName>
    <component>
        <recommendedName>
            <fullName>Caspase-3 subunit p17</fullName>
        </recommendedName>
    </component>
    <component>
        <recommendedName>
            <fullName>Caspase-3 subunit p12</fullName>
        </recommendedName>
    </component>
</protein>
<feature type="propeptide" id="PRO_0000004585" evidence="2">
    <location>
        <begin position="1"/>
        <end position="9"/>
    </location>
</feature>
<feature type="propeptide" id="PRO_0000004586" evidence="2">
    <location>
        <begin position="10"/>
        <end position="28"/>
    </location>
</feature>
<feature type="chain" id="PRO_0000004587" description="Caspase-3 subunit p17" evidence="2">
    <location>
        <begin position="29"/>
        <end position="175"/>
    </location>
</feature>
<feature type="chain" id="PRO_0000004588" description="Caspase-3 subunit p12" evidence="2">
    <location>
        <begin position="176"/>
        <end position="277"/>
    </location>
</feature>
<feature type="active site" evidence="1">
    <location>
        <position position="121"/>
    </location>
</feature>
<feature type="active site" evidence="1">
    <location>
        <position position="163"/>
    </location>
</feature>
<feature type="modified residue" description="N-acetylmethionine" evidence="2">
    <location>
        <position position="1"/>
    </location>
</feature>
<feature type="modified residue" description="N6-acetyllysine" evidence="3">
    <location>
        <position position="11"/>
    </location>
</feature>
<feature type="modified residue" description="Phosphoserine" evidence="2">
    <location>
        <position position="26"/>
    </location>
</feature>
<feature type="modified residue" description="S-nitrosocysteine; in inhibited form" evidence="2">
    <location>
        <position position="163"/>
    </location>
</feature>
<accession>Q8MJC3</accession>
<keyword id="KW-0007">Acetylation</keyword>
<keyword id="KW-0053">Apoptosis</keyword>
<keyword id="KW-0963">Cytoplasm</keyword>
<keyword id="KW-0378">Hydrolase</keyword>
<keyword id="KW-0597">Phosphoprotein</keyword>
<keyword id="KW-0645">Protease</keyword>
<keyword id="KW-1185">Reference proteome</keyword>
<keyword id="KW-0702">S-nitrosylation</keyword>
<keyword id="KW-0788">Thiol protease</keyword>
<keyword id="KW-0832">Ubl conjugation</keyword>
<keyword id="KW-0865">Zymogen</keyword>
<reference key="1">
    <citation type="journal article" date="1998" name="Am. J. Physiol.">
        <title>Molecular characterization of rabbit CPP32 and its function in vascular smooth muscle cell apoptosis.</title>
        <authorList>
            <person name="Wang H."/>
            <person name="Keiser J.A."/>
        </authorList>
    </citation>
    <scope>NUCLEOTIDE SEQUENCE [MRNA]</scope>
</reference>
<proteinExistence type="evidence at transcript level"/>
<gene>
    <name type="primary">CASP3</name>
</gene>
<comment type="function">
    <text evidence="2 3 4">Involved in the activation cascade of caspases responsible for apoptosis execution. At the onset of apoptosis, it proteolytically cleaves poly(ADP-ribose) polymerase PARP1 at a '216-Asp-|-Gly-217' bond. Cleaves and activates sterol regulatory element binding proteins (SREBPs) between the basic helix-loop-helix leucine zipper domain and the membrane attachment domain. Cleaves and activates caspase-6, -7 and -9 (CASP6, CASP7 and CASP9, respectively). Cleaves and inactivates interleukin-18 (IL18) (By similarity). Triggers cell adhesion in sympathetic neurons through RET cleavage (By similarity). Cleaves IL-1 beta between an Asp and an Ala, releasing the mature cytokine which is involved in a variety of inflammatory processes (By similarity). Cleaves and inhibits serine/threonine-protein kinase AKT1 in response to oxidative stress. Acts as an inhibitor of type I interferon production during virus-induced apoptosis by mediating cleavage of antiviral proteins CGAS, IRF3 and MAVS, thereby preventing cytokine overproduction. Also involved in pyroptosis by mediating cleavage and activation of gasdermin-E (GSDME) (By similarity). Cleaves XRCC4 and phospholipid scramblase proteins XKR4, XKR8 and XKR9, leading to promote phosphatidylserine exposure on apoptotic cell surface (By similarity). Cleaves BIRC6 following inhibition of BIRC6-caspase binding by DIABLO/SMAC (By similarity).</text>
</comment>
<comment type="catalytic activity">
    <reaction evidence="2">
        <text>Strict requirement for an Asp residue at positions P1 and P4. It has a preferred cleavage sequence of Asp-Xaa-Xaa-Asp-|- with a hydrophobic amino-acid residue at P2 and a hydrophilic amino-acid residue at P3, although Val or Ala are also accepted at this position.</text>
        <dbReference type="EC" id="3.4.22.56"/>
    </reaction>
</comment>
<comment type="activity regulation">
    <text evidence="2">Inhibited by BIRC6; following inhibition of BIRC6-caspase binding by DIABLO/SMAC, BIRC6 is subjected to caspase cleavage, leading to an increase in active caspases.</text>
</comment>
<comment type="subunit">
    <text evidence="2">Heterotetramer that consists of two anti-parallel arranged heterodimers, each one formed by a 17 kDa (p17) and a 12 kDa (p12) subunit. Interacts with BIRC6/bruce.</text>
</comment>
<comment type="subcellular location">
    <subcellularLocation>
        <location evidence="2">Cytoplasm</location>
    </subcellularLocation>
</comment>
<comment type="PTM">
    <text evidence="2">Cleavage by granzyme B, caspase-6, caspase-8 and caspase-10 generates the two active subunits. Additional processing of the propeptides is likely due to the autocatalytic activity of the activated protease. Active heterodimers between the small subunit of caspase-7 protease and the large subunit of caspase-3 also occur and vice versa.</text>
</comment>
<comment type="PTM">
    <text evidence="2">S-nitrosylated on its catalytic site cysteine in unstimulated cell lines and denitrosylated upon activation of the Fas apoptotic pathway, associated with an increase in intracellular caspase activity. Fas therefore activates caspase-3 not only by inducing the cleavage of the caspase zymogen to its active subunits, but also by stimulating the denitrosylation of its active site thiol.</text>
</comment>
<comment type="PTM">
    <text evidence="2">Ubiquitinated by BIRC6; this activity is inhibited by DIABLO/SMAC.</text>
</comment>
<comment type="similarity">
    <text evidence="5">Belongs to the peptidase C14A family.</text>
</comment>
<sequence length="277" mass="31653">MENNETSVDAKSIKNLETQTIHGSKSMDSGKYLDNSYKMDYPEMGLCIIINNKNFHKNTGMSSRSGTDVNAANLGETFMNLKYEVRNKNDLTREEIMELMYNVSKEDHSKRSSFICVILSHGDEGVIYGTNGPIELKKLTSFFRGDYCRSLTGKPKLFIIQACRGTELDSGIETDSGVDYDMACQKIPVEADFLYAYSTAPGYYSWRNSEEGSWFIQSLCAMLKEYAHKLEFMHILTRVNRKVATEFESYSLDATFHAKKQIPCIVSMLTKELYFYH</sequence>
<evidence type="ECO:0000250" key="1">
    <source>
        <dbReference type="UniProtKB" id="P29466"/>
    </source>
</evidence>
<evidence type="ECO:0000250" key="2">
    <source>
        <dbReference type="UniProtKB" id="P42574"/>
    </source>
</evidence>
<evidence type="ECO:0000250" key="3">
    <source>
        <dbReference type="UniProtKB" id="P70677"/>
    </source>
</evidence>
<evidence type="ECO:0000250" key="4">
    <source>
        <dbReference type="UniProtKB" id="Q60431"/>
    </source>
</evidence>
<evidence type="ECO:0000305" key="5"/>
<name>CASP3_RABIT</name>
<dbReference type="EC" id="3.4.22.56"/>
<dbReference type="EMBL" id="AF506008">
    <property type="protein sequence ID" value="AAM47195.1"/>
    <property type="molecule type" value="mRNA"/>
</dbReference>
<dbReference type="RefSeq" id="NP_001075586.1">
    <property type="nucleotide sequence ID" value="NM_001082117.1"/>
</dbReference>
<dbReference type="SMR" id="Q8MJC3"/>
<dbReference type="FunCoup" id="Q8MJC3">
    <property type="interactions" value="725"/>
</dbReference>
<dbReference type="STRING" id="9986.ENSOCUP00000036614"/>
<dbReference type="MEROPS" id="C14.003"/>
<dbReference type="PaxDb" id="9986-ENSOCUP00000005723"/>
<dbReference type="GeneID" id="100008840"/>
<dbReference type="KEGG" id="ocu:100008840"/>
<dbReference type="CTD" id="836"/>
<dbReference type="eggNOG" id="KOG3573">
    <property type="taxonomic scope" value="Eukaryota"/>
</dbReference>
<dbReference type="InParanoid" id="Q8MJC3"/>
<dbReference type="OrthoDB" id="6116485at2759"/>
<dbReference type="Proteomes" id="UP000001811">
    <property type="component" value="Unplaced"/>
</dbReference>
<dbReference type="GO" id="GO:0005737">
    <property type="term" value="C:cytoplasm"/>
    <property type="evidence" value="ECO:0007669"/>
    <property type="project" value="UniProtKB-SubCell"/>
</dbReference>
<dbReference type="GO" id="GO:0031264">
    <property type="term" value="C:death-inducing signaling complex"/>
    <property type="evidence" value="ECO:0007669"/>
    <property type="project" value="TreeGrafter"/>
</dbReference>
<dbReference type="GO" id="GO:0004197">
    <property type="term" value="F:cysteine-type endopeptidase activity"/>
    <property type="evidence" value="ECO:0000250"/>
    <property type="project" value="UniProtKB"/>
</dbReference>
<dbReference type="GO" id="GO:0004175">
    <property type="term" value="F:endopeptidase activity"/>
    <property type="evidence" value="ECO:0000250"/>
    <property type="project" value="UniProtKB"/>
</dbReference>
<dbReference type="GO" id="GO:0006915">
    <property type="term" value="P:apoptotic process"/>
    <property type="evidence" value="ECO:0007669"/>
    <property type="project" value="UniProtKB-KW"/>
</dbReference>
<dbReference type="GO" id="GO:0030218">
    <property type="term" value="P:erythrocyte differentiation"/>
    <property type="evidence" value="ECO:0007669"/>
    <property type="project" value="TreeGrafter"/>
</dbReference>
<dbReference type="GO" id="GO:0030216">
    <property type="term" value="P:keratinocyte differentiation"/>
    <property type="evidence" value="ECO:0007669"/>
    <property type="project" value="TreeGrafter"/>
</dbReference>
<dbReference type="GO" id="GO:0030182">
    <property type="term" value="P:neuron differentiation"/>
    <property type="evidence" value="ECO:0007669"/>
    <property type="project" value="TreeGrafter"/>
</dbReference>
<dbReference type="GO" id="GO:1902004">
    <property type="term" value="P:positive regulation of amyloid-beta formation"/>
    <property type="evidence" value="ECO:0000250"/>
    <property type="project" value="UniProtKB"/>
</dbReference>
<dbReference type="GO" id="GO:0043525">
    <property type="term" value="P:positive regulation of neuron apoptotic process"/>
    <property type="evidence" value="ECO:0007669"/>
    <property type="project" value="TreeGrafter"/>
</dbReference>
<dbReference type="GO" id="GO:0006508">
    <property type="term" value="P:proteolysis"/>
    <property type="evidence" value="ECO:0000250"/>
    <property type="project" value="UniProtKB"/>
</dbReference>
<dbReference type="GO" id="GO:0031647">
    <property type="term" value="P:regulation of protein stability"/>
    <property type="evidence" value="ECO:0000250"/>
    <property type="project" value="UniProtKB"/>
</dbReference>
<dbReference type="CDD" id="cd00032">
    <property type="entry name" value="CASc"/>
    <property type="match status" value="1"/>
</dbReference>
<dbReference type="FunFam" id="3.30.70.1470:FF:000002">
    <property type="entry name" value="Caspase-3"/>
    <property type="match status" value="1"/>
</dbReference>
<dbReference type="FunFam" id="3.40.50.1460:FF:000001">
    <property type="entry name" value="Caspase-3 preproprotein"/>
    <property type="match status" value="1"/>
</dbReference>
<dbReference type="Gene3D" id="3.40.50.1460">
    <property type="match status" value="1"/>
</dbReference>
<dbReference type="Gene3D" id="3.30.70.1470">
    <property type="entry name" value="Caspase-like"/>
    <property type="match status" value="1"/>
</dbReference>
<dbReference type="InterPro" id="IPR029030">
    <property type="entry name" value="Caspase-like_dom_sf"/>
</dbReference>
<dbReference type="InterPro" id="IPR033139">
    <property type="entry name" value="Caspase_cys_AS"/>
</dbReference>
<dbReference type="InterPro" id="IPR016129">
    <property type="entry name" value="Caspase_his_AS"/>
</dbReference>
<dbReference type="InterPro" id="IPR002398">
    <property type="entry name" value="Pept_C14"/>
</dbReference>
<dbReference type="InterPro" id="IPR011600">
    <property type="entry name" value="Pept_C14_caspase"/>
</dbReference>
<dbReference type="InterPro" id="IPR002138">
    <property type="entry name" value="Pept_C14_p10"/>
</dbReference>
<dbReference type="InterPro" id="IPR001309">
    <property type="entry name" value="Pept_C14_p20"/>
</dbReference>
<dbReference type="InterPro" id="IPR015917">
    <property type="entry name" value="Pept_C14A"/>
</dbReference>
<dbReference type="PANTHER" id="PTHR10454">
    <property type="entry name" value="CASPASE"/>
    <property type="match status" value="1"/>
</dbReference>
<dbReference type="PANTHER" id="PTHR10454:SF198">
    <property type="entry name" value="CASPASE-3"/>
    <property type="match status" value="1"/>
</dbReference>
<dbReference type="Pfam" id="PF00656">
    <property type="entry name" value="Peptidase_C14"/>
    <property type="match status" value="1"/>
</dbReference>
<dbReference type="PRINTS" id="PR00376">
    <property type="entry name" value="IL1BCENZYME"/>
</dbReference>
<dbReference type="SMART" id="SM00115">
    <property type="entry name" value="CASc"/>
    <property type="match status" value="1"/>
</dbReference>
<dbReference type="SUPFAM" id="SSF52129">
    <property type="entry name" value="Caspase-like"/>
    <property type="match status" value="1"/>
</dbReference>
<dbReference type="PROSITE" id="PS01122">
    <property type="entry name" value="CASPASE_CYS"/>
    <property type="match status" value="1"/>
</dbReference>
<dbReference type="PROSITE" id="PS01121">
    <property type="entry name" value="CASPASE_HIS"/>
    <property type="match status" value="1"/>
</dbReference>
<dbReference type="PROSITE" id="PS50207">
    <property type="entry name" value="CASPASE_P10"/>
    <property type="match status" value="1"/>
</dbReference>
<dbReference type="PROSITE" id="PS50208">
    <property type="entry name" value="CASPASE_P20"/>
    <property type="match status" value="1"/>
</dbReference>
<organism>
    <name type="scientific">Oryctolagus cuniculus</name>
    <name type="common">Rabbit</name>
    <dbReference type="NCBI Taxonomy" id="9986"/>
    <lineage>
        <taxon>Eukaryota</taxon>
        <taxon>Metazoa</taxon>
        <taxon>Chordata</taxon>
        <taxon>Craniata</taxon>
        <taxon>Vertebrata</taxon>
        <taxon>Euteleostomi</taxon>
        <taxon>Mammalia</taxon>
        <taxon>Eutheria</taxon>
        <taxon>Euarchontoglires</taxon>
        <taxon>Glires</taxon>
        <taxon>Lagomorpha</taxon>
        <taxon>Leporidae</taxon>
        <taxon>Oryctolagus</taxon>
    </lineage>
</organism>